<proteinExistence type="inferred from homology"/>
<protein>
    <recommendedName>
        <fullName evidence="1">6,7-dimethyl-8-ribityllumazine synthase</fullName>
        <shortName evidence="1">DMRL synthase</shortName>
        <shortName evidence="1">LS</shortName>
        <shortName evidence="1">Lumazine synthase</shortName>
        <ecNumber evidence="1">2.5.1.78</ecNumber>
    </recommendedName>
</protein>
<gene>
    <name evidence="1" type="primary">ribH</name>
    <name type="ordered locus">RPE_2812</name>
</gene>
<accession>Q07MT5</accession>
<comment type="function">
    <text evidence="1">Catalyzes the formation of 6,7-dimethyl-8-ribityllumazine by condensation of 5-amino-6-(D-ribitylamino)uracil with 3,4-dihydroxy-2-butanone 4-phosphate. This is the penultimate step in the biosynthesis of riboflavin.</text>
</comment>
<comment type="catalytic activity">
    <reaction evidence="1">
        <text>(2S)-2-hydroxy-3-oxobutyl phosphate + 5-amino-6-(D-ribitylamino)uracil = 6,7-dimethyl-8-(1-D-ribityl)lumazine + phosphate + 2 H2O + H(+)</text>
        <dbReference type="Rhea" id="RHEA:26152"/>
        <dbReference type="ChEBI" id="CHEBI:15377"/>
        <dbReference type="ChEBI" id="CHEBI:15378"/>
        <dbReference type="ChEBI" id="CHEBI:15934"/>
        <dbReference type="ChEBI" id="CHEBI:43474"/>
        <dbReference type="ChEBI" id="CHEBI:58201"/>
        <dbReference type="ChEBI" id="CHEBI:58830"/>
        <dbReference type="EC" id="2.5.1.78"/>
    </reaction>
</comment>
<comment type="pathway">
    <text evidence="1">Cofactor biosynthesis; riboflavin biosynthesis; riboflavin from 2-hydroxy-3-oxobutyl phosphate and 5-amino-6-(D-ribitylamino)uracil: step 1/2.</text>
</comment>
<comment type="similarity">
    <text evidence="1">Belongs to the DMRL synthase family.</text>
</comment>
<organism>
    <name type="scientific">Rhodopseudomonas palustris (strain BisA53)</name>
    <dbReference type="NCBI Taxonomy" id="316055"/>
    <lineage>
        <taxon>Bacteria</taxon>
        <taxon>Pseudomonadati</taxon>
        <taxon>Pseudomonadota</taxon>
        <taxon>Alphaproteobacteria</taxon>
        <taxon>Hyphomicrobiales</taxon>
        <taxon>Nitrobacteraceae</taxon>
        <taxon>Rhodopseudomonas</taxon>
    </lineage>
</organism>
<sequence>MADPRRARLTDDTEIAGARALIVEARFYDDIQDAMLEGARAELTAAGLTHDVITVPGALEIPAAIAIALDAAEAHGKPYDAVIALGCVVRGDTIHFEIVSMESSRALMDLAVSRKIPLGNGIITVNTDEQAWARAKATELDKGGDAARAALAMLRIKRRLAKG</sequence>
<dbReference type="EC" id="2.5.1.78" evidence="1"/>
<dbReference type="EMBL" id="CP000463">
    <property type="protein sequence ID" value="ABJ06749.1"/>
    <property type="molecule type" value="Genomic_DNA"/>
</dbReference>
<dbReference type="SMR" id="Q07MT5"/>
<dbReference type="STRING" id="316055.RPE_2812"/>
<dbReference type="KEGG" id="rpe:RPE_2812"/>
<dbReference type="eggNOG" id="COG0054">
    <property type="taxonomic scope" value="Bacteria"/>
</dbReference>
<dbReference type="HOGENOM" id="CLU_089358_1_2_5"/>
<dbReference type="OrthoDB" id="9809709at2"/>
<dbReference type="UniPathway" id="UPA00275">
    <property type="reaction ID" value="UER00404"/>
</dbReference>
<dbReference type="GO" id="GO:0005829">
    <property type="term" value="C:cytosol"/>
    <property type="evidence" value="ECO:0007669"/>
    <property type="project" value="TreeGrafter"/>
</dbReference>
<dbReference type="GO" id="GO:0009349">
    <property type="term" value="C:riboflavin synthase complex"/>
    <property type="evidence" value="ECO:0007669"/>
    <property type="project" value="InterPro"/>
</dbReference>
<dbReference type="GO" id="GO:0000906">
    <property type="term" value="F:6,7-dimethyl-8-ribityllumazine synthase activity"/>
    <property type="evidence" value="ECO:0007669"/>
    <property type="project" value="UniProtKB-UniRule"/>
</dbReference>
<dbReference type="GO" id="GO:0009231">
    <property type="term" value="P:riboflavin biosynthetic process"/>
    <property type="evidence" value="ECO:0007669"/>
    <property type="project" value="UniProtKB-UniRule"/>
</dbReference>
<dbReference type="CDD" id="cd09209">
    <property type="entry name" value="Lumazine_synthase-I"/>
    <property type="match status" value="1"/>
</dbReference>
<dbReference type="Gene3D" id="3.40.50.960">
    <property type="entry name" value="Lumazine/riboflavin synthase"/>
    <property type="match status" value="1"/>
</dbReference>
<dbReference type="HAMAP" id="MF_00178">
    <property type="entry name" value="Lumazine_synth"/>
    <property type="match status" value="1"/>
</dbReference>
<dbReference type="InterPro" id="IPR034964">
    <property type="entry name" value="LS"/>
</dbReference>
<dbReference type="InterPro" id="IPR002180">
    <property type="entry name" value="LS/RS"/>
</dbReference>
<dbReference type="InterPro" id="IPR036467">
    <property type="entry name" value="LS/RS_sf"/>
</dbReference>
<dbReference type="NCBIfam" id="TIGR00114">
    <property type="entry name" value="lumazine-synth"/>
    <property type="match status" value="1"/>
</dbReference>
<dbReference type="PANTHER" id="PTHR21058:SF0">
    <property type="entry name" value="6,7-DIMETHYL-8-RIBITYLLUMAZINE SYNTHASE"/>
    <property type="match status" value="1"/>
</dbReference>
<dbReference type="PANTHER" id="PTHR21058">
    <property type="entry name" value="6,7-DIMETHYL-8-RIBITYLLUMAZINE SYNTHASE DMRL SYNTHASE LUMAZINE SYNTHASE"/>
    <property type="match status" value="1"/>
</dbReference>
<dbReference type="Pfam" id="PF00885">
    <property type="entry name" value="DMRL_synthase"/>
    <property type="match status" value="1"/>
</dbReference>
<dbReference type="SUPFAM" id="SSF52121">
    <property type="entry name" value="Lumazine synthase"/>
    <property type="match status" value="1"/>
</dbReference>
<evidence type="ECO:0000255" key="1">
    <source>
        <dbReference type="HAMAP-Rule" id="MF_00178"/>
    </source>
</evidence>
<keyword id="KW-0686">Riboflavin biosynthesis</keyword>
<keyword id="KW-0808">Transferase</keyword>
<reference key="1">
    <citation type="submission" date="2006-09" db="EMBL/GenBank/DDBJ databases">
        <title>Complete sequence of Rhodopseudomonas palustris BisA53.</title>
        <authorList>
            <consortium name="US DOE Joint Genome Institute"/>
            <person name="Copeland A."/>
            <person name="Lucas S."/>
            <person name="Lapidus A."/>
            <person name="Barry K."/>
            <person name="Detter J.C."/>
            <person name="Glavina del Rio T."/>
            <person name="Hammon N."/>
            <person name="Israni S."/>
            <person name="Dalin E."/>
            <person name="Tice H."/>
            <person name="Pitluck S."/>
            <person name="Chain P."/>
            <person name="Malfatti S."/>
            <person name="Shin M."/>
            <person name="Vergez L."/>
            <person name="Schmutz J."/>
            <person name="Larimer F."/>
            <person name="Land M."/>
            <person name="Hauser L."/>
            <person name="Pelletier D.A."/>
            <person name="Kyrpides N."/>
            <person name="Kim E."/>
            <person name="Harwood C.S."/>
            <person name="Oda Y."/>
            <person name="Richardson P."/>
        </authorList>
    </citation>
    <scope>NUCLEOTIDE SEQUENCE [LARGE SCALE GENOMIC DNA]</scope>
    <source>
        <strain>BisA53</strain>
    </source>
</reference>
<feature type="chain" id="PRO_1000040500" description="6,7-dimethyl-8-ribityllumazine synthase">
    <location>
        <begin position="1"/>
        <end position="163"/>
    </location>
</feature>
<feature type="active site" description="Proton donor" evidence="1">
    <location>
        <position position="95"/>
    </location>
</feature>
<feature type="binding site" evidence="1">
    <location>
        <position position="27"/>
    </location>
    <ligand>
        <name>5-amino-6-(D-ribitylamino)uracil</name>
        <dbReference type="ChEBI" id="CHEBI:15934"/>
    </ligand>
</feature>
<feature type="binding site" evidence="1">
    <location>
        <begin position="58"/>
        <end position="60"/>
    </location>
    <ligand>
        <name>5-amino-6-(D-ribitylamino)uracil</name>
        <dbReference type="ChEBI" id="CHEBI:15934"/>
    </ligand>
</feature>
<feature type="binding site" evidence="1">
    <location>
        <begin position="87"/>
        <end position="89"/>
    </location>
    <ligand>
        <name>5-amino-6-(D-ribitylamino)uracil</name>
        <dbReference type="ChEBI" id="CHEBI:15934"/>
    </ligand>
</feature>
<feature type="binding site" evidence="1">
    <location>
        <begin position="92"/>
        <end position="93"/>
    </location>
    <ligand>
        <name>(2S)-2-hydroxy-3-oxobutyl phosphate</name>
        <dbReference type="ChEBI" id="CHEBI:58830"/>
    </ligand>
</feature>
<feature type="binding site" evidence="1">
    <location>
        <position position="120"/>
    </location>
    <ligand>
        <name>5-amino-6-(D-ribitylamino)uracil</name>
        <dbReference type="ChEBI" id="CHEBI:15934"/>
    </ligand>
</feature>
<feature type="binding site" evidence="1">
    <location>
        <position position="134"/>
    </location>
    <ligand>
        <name>(2S)-2-hydroxy-3-oxobutyl phosphate</name>
        <dbReference type="ChEBI" id="CHEBI:58830"/>
    </ligand>
</feature>
<name>RISB_RHOP5</name>